<accession>P04304</accession>
<organism>
    <name type="scientific">Vaccinia virus (strain Western Reserve)</name>
    <name type="common">VACV</name>
    <name type="synonym">Vaccinia virus (strain WR)</name>
    <dbReference type="NCBI Taxonomy" id="10254"/>
    <lineage>
        <taxon>Viruses</taxon>
        <taxon>Varidnaviria</taxon>
        <taxon>Bamfordvirae</taxon>
        <taxon>Nucleocytoviricota</taxon>
        <taxon>Pokkesviricetes</taxon>
        <taxon>Chitovirales</taxon>
        <taxon>Poxviridae</taxon>
        <taxon>Chordopoxvirinae</taxon>
        <taxon>Orthopoxvirus</taxon>
        <taxon>Vaccinia virus</taxon>
    </lineage>
</organism>
<reference key="1">
    <citation type="journal article" date="1986" name="Virology">
        <title>Nucleotide sequence and genetic map of the 16-kb vaccinia virus HindIII D fragment.</title>
        <authorList>
            <person name="Niles E.G."/>
            <person name="Condit R.C."/>
            <person name="Caro P."/>
            <person name="Davidson K."/>
            <person name="Matusick L."/>
            <person name="Seto J."/>
        </authorList>
    </citation>
    <scope>NUCLEOTIDE SEQUENCE [GENOMIC DNA]</scope>
</reference>
<feature type="chain" id="PRO_0000099689" description="Uncharacterized 7.3 kDa protein">
    <location>
        <begin position="1"/>
        <end position="69"/>
    </location>
</feature>
<dbReference type="EMBL" id="M15058">
    <property type="status" value="NOT_ANNOTATED_CDS"/>
    <property type="molecule type" value="Genomic_DNA"/>
</dbReference>
<dbReference type="PIR" id="A03878">
    <property type="entry name" value="QQVZ7"/>
</dbReference>
<sequence>MKILTIEYASSSLRLSNSVHSGLFSIYLSNSSHLNASTNLGSSFCLHADGTPIVLRTKITSLPLIAASI</sequence>
<name>YVDC_VACCW</name>
<proteinExistence type="predicted"/>
<gene>
    <name type="ORF">D ORF C</name>
</gene>
<organismHost>
    <name type="scientific">Bos taurus</name>
    <name type="common">Bovine</name>
    <dbReference type="NCBI Taxonomy" id="9913"/>
</organismHost>
<protein>
    <recommendedName>
        <fullName>Uncharacterized 7.3 kDa protein</fullName>
    </recommendedName>
</protein>